<accession>Q61458</accession>
<accession>Q9CVJ0</accession>
<accession>Q9JHV7</accession>
<sequence>MYHSSSQKRHWTFASEEQLARLRADANRKFKCKAVANGKVLPNDPVFLEPHEELTLCKYYEKRLLEFCSVFKPAMPRSVVGTACMYFKRFYLNNSVMEYHPRIIMLTCAFLACKVDEFNVSSPQFVGNLRESPLGQERALEQILEYELLLIQQLNFHLIVHNPYRPFEGFLIDIKTRYPMLENPEILRKTADDFLSRIALTDAYLLYTPSQIALTAILSSASRAGITMESYLSESLMLKENRTCLSQLLDIMKSMRNLVKKYEPPRSDEVAVLKQKLERCHSSDLALNAVTKKRKGYEDDDYVSKKPKQEEEEWTDDDLVDSL</sequence>
<proteinExistence type="evidence at protein level"/>
<evidence type="ECO:0000250" key="1">
    <source>
        <dbReference type="UniProtKB" id="P51946"/>
    </source>
</evidence>
<evidence type="ECO:0000256" key="2">
    <source>
        <dbReference type="SAM" id="MobiDB-lite"/>
    </source>
</evidence>
<evidence type="ECO:0000305" key="3"/>
<gene>
    <name type="primary">Ccnh</name>
</gene>
<reference key="1">
    <citation type="journal article" date="2001" name="Biol. Reprod.">
        <title>Meiotic expression of the cyclin H/Cdk7 complex in male germ cells of the mouse.</title>
        <authorList>
            <person name="Kim J.M."/>
            <person name="McGaughy J.T."/>
            <person name="Bogle R.K."/>
            <person name="Ravnik S.E."/>
        </authorList>
    </citation>
    <scope>NUCLEOTIDE SEQUENCE [MRNA]</scope>
    <source>
        <tissue>Spermatocyte</tissue>
    </source>
</reference>
<reference key="2">
    <citation type="journal article" date="2005" name="Science">
        <title>The transcriptional landscape of the mammalian genome.</title>
        <authorList>
            <person name="Carninci P."/>
            <person name="Kasukawa T."/>
            <person name="Katayama S."/>
            <person name="Gough J."/>
            <person name="Frith M.C."/>
            <person name="Maeda N."/>
            <person name="Oyama R."/>
            <person name="Ravasi T."/>
            <person name="Lenhard B."/>
            <person name="Wells C."/>
            <person name="Kodzius R."/>
            <person name="Shimokawa K."/>
            <person name="Bajic V.B."/>
            <person name="Brenner S.E."/>
            <person name="Batalov S."/>
            <person name="Forrest A.R."/>
            <person name="Zavolan M."/>
            <person name="Davis M.J."/>
            <person name="Wilming L.G."/>
            <person name="Aidinis V."/>
            <person name="Allen J.E."/>
            <person name="Ambesi-Impiombato A."/>
            <person name="Apweiler R."/>
            <person name="Aturaliya R.N."/>
            <person name="Bailey T.L."/>
            <person name="Bansal M."/>
            <person name="Baxter L."/>
            <person name="Beisel K.W."/>
            <person name="Bersano T."/>
            <person name="Bono H."/>
            <person name="Chalk A.M."/>
            <person name="Chiu K.P."/>
            <person name="Choudhary V."/>
            <person name="Christoffels A."/>
            <person name="Clutterbuck D.R."/>
            <person name="Crowe M.L."/>
            <person name="Dalla E."/>
            <person name="Dalrymple B.P."/>
            <person name="de Bono B."/>
            <person name="Della Gatta G."/>
            <person name="di Bernardo D."/>
            <person name="Down T."/>
            <person name="Engstrom P."/>
            <person name="Fagiolini M."/>
            <person name="Faulkner G."/>
            <person name="Fletcher C.F."/>
            <person name="Fukushima T."/>
            <person name="Furuno M."/>
            <person name="Futaki S."/>
            <person name="Gariboldi M."/>
            <person name="Georgii-Hemming P."/>
            <person name="Gingeras T.R."/>
            <person name="Gojobori T."/>
            <person name="Green R.E."/>
            <person name="Gustincich S."/>
            <person name="Harbers M."/>
            <person name="Hayashi Y."/>
            <person name="Hensch T.K."/>
            <person name="Hirokawa N."/>
            <person name="Hill D."/>
            <person name="Huminiecki L."/>
            <person name="Iacono M."/>
            <person name="Ikeo K."/>
            <person name="Iwama A."/>
            <person name="Ishikawa T."/>
            <person name="Jakt M."/>
            <person name="Kanapin A."/>
            <person name="Katoh M."/>
            <person name="Kawasawa Y."/>
            <person name="Kelso J."/>
            <person name="Kitamura H."/>
            <person name="Kitano H."/>
            <person name="Kollias G."/>
            <person name="Krishnan S.P."/>
            <person name="Kruger A."/>
            <person name="Kummerfeld S.K."/>
            <person name="Kurochkin I.V."/>
            <person name="Lareau L.F."/>
            <person name="Lazarevic D."/>
            <person name="Lipovich L."/>
            <person name="Liu J."/>
            <person name="Liuni S."/>
            <person name="McWilliam S."/>
            <person name="Madan Babu M."/>
            <person name="Madera M."/>
            <person name="Marchionni L."/>
            <person name="Matsuda H."/>
            <person name="Matsuzawa S."/>
            <person name="Miki H."/>
            <person name="Mignone F."/>
            <person name="Miyake S."/>
            <person name="Morris K."/>
            <person name="Mottagui-Tabar S."/>
            <person name="Mulder N."/>
            <person name="Nakano N."/>
            <person name="Nakauchi H."/>
            <person name="Ng P."/>
            <person name="Nilsson R."/>
            <person name="Nishiguchi S."/>
            <person name="Nishikawa S."/>
            <person name="Nori F."/>
            <person name="Ohara O."/>
            <person name="Okazaki Y."/>
            <person name="Orlando V."/>
            <person name="Pang K.C."/>
            <person name="Pavan W.J."/>
            <person name="Pavesi G."/>
            <person name="Pesole G."/>
            <person name="Petrovsky N."/>
            <person name="Piazza S."/>
            <person name="Reed J."/>
            <person name="Reid J.F."/>
            <person name="Ring B.Z."/>
            <person name="Ringwald M."/>
            <person name="Rost B."/>
            <person name="Ruan Y."/>
            <person name="Salzberg S.L."/>
            <person name="Sandelin A."/>
            <person name="Schneider C."/>
            <person name="Schoenbach C."/>
            <person name="Sekiguchi K."/>
            <person name="Semple C.A."/>
            <person name="Seno S."/>
            <person name="Sessa L."/>
            <person name="Sheng Y."/>
            <person name="Shibata Y."/>
            <person name="Shimada H."/>
            <person name="Shimada K."/>
            <person name="Silva D."/>
            <person name="Sinclair B."/>
            <person name="Sperling S."/>
            <person name="Stupka E."/>
            <person name="Sugiura K."/>
            <person name="Sultana R."/>
            <person name="Takenaka Y."/>
            <person name="Taki K."/>
            <person name="Tammoja K."/>
            <person name="Tan S.L."/>
            <person name="Tang S."/>
            <person name="Taylor M.S."/>
            <person name="Tegner J."/>
            <person name="Teichmann S.A."/>
            <person name="Ueda H.R."/>
            <person name="van Nimwegen E."/>
            <person name="Verardo R."/>
            <person name="Wei C.L."/>
            <person name="Yagi K."/>
            <person name="Yamanishi H."/>
            <person name="Zabarovsky E."/>
            <person name="Zhu S."/>
            <person name="Zimmer A."/>
            <person name="Hide W."/>
            <person name="Bult C."/>
            <person name="Grimmond S.M."/>
            <person name="Teasdale R.D."/>
            <person name="Liu E.T."/>
            <person name="Brusic V."/>
            <person name="Quackenbush J."/>
            <person name="Wahlestedt C."/>
            <person name="Mattick J.S."/>
            <person name="Hume D.A."/>
            <person name="Kai C."/>
            <person name="Sasaki D."/>
            <person name="Tomaru Y."/>
            <person name="Fukuda S."/>
            <person name="Kanamori-Katayama M."/>
            <person name="Suzuki M."/>
            <person name="Aoki J."/>
            <person name="Arakawa T."/>
            <person name="Iida J."/>
            <person name="Imamura K."/>
            <person name="Itoh M."/>
            <person name="Kato T."/>
            <person name="Kawaji H."/>
            <person name="Kawagashira N."/>
            <person name="Kawashima T."/>
            <person name="Kojima M."/>
            <person name="Kondo S."/>
            <person name="Konno H."/>
            <person name="Nakano K."/>
            <person name="Ninomiya N."/>
            <person name="Nishio T."/>
            <person name="Okada M."/>
            <person name="Plessy C."/>
            <person name="Shibata K."/>
            <person name="Shiraki T."/>
            <person name="Suzuki S."/>
            <person name="Tagami M."/>
            <person name="Waki K."/>
            <person name="Watahiki A."/>
            <person name="Okamura-Oho Y."/>
            <person name="Suzuki H."/>
            <person name="Kawai J."/>
            <person name="Hayashizaki Y."/>
        </authorList>
    </citation>
    <scope>NUCLEOTIDE SEQUENCE [LARGE SCALE MRNA]</scope>
    <source>
        <strain>C57BL/6J</strain>
        <tissue>Medulla oblongata</tissue>
        <tissue>Pancreas</tissue>
    </source>
</reference>
<reference key="3">
    <citation type="journal article" date="2004" name="Genome Res.">
        <title>The status, quality, and expansion of the NIH full-length cDNA project: the Mammalian Gene Collection (MGC).</title>
        <authorList>
            <consortium name="The MGC Project Team"/>
        </authorList>
    </citation>
    <scope>NUCLEOTIDE SEQUENCE [LARGE SCALE MRNA]</scope>
    <source>
        <strain>C57BL/6J</strain>
        <tissue>Thymus</tissue>
    </source>
</reference>
<reference key="4">
    <citation type="submission" date="1994-11" db="EMBL/GenBank/DDBJ databases">
        <authorList>
            <person name="Hall F.L."/>
            <person name="Wu L."/>
        </authorList>
    </citation>
    <scope>NUCLEOTIDE SEQUENCE [MRNA] OF 92-109</scope>
    <source>
        <strain>CD-1</strain>
        <tissue>Testis</tissue>
    </source>
</reference>
<reference key="5">
    <citation type="journal article" date="2010" name="Cell">
        <title>A tissue-specific atlas of mouse protein phosphorylation and expression.</title>
        <authorList>
            <person name="Huttlin E.L."/>
            <person name="Jedrychowski M.P."/>
            <person name="Elias J.E."/>
            <person name="Goswami T."/>
            <person name="Rad R."/>
            <person name="Beausoleil S.A."/>
            <person name="Villen J."/>
            <person name="Haas W."/>
            <person name="Sowa M.E."/>
            <person name="Gygi S.P."/>
        </authorList>
    </citation>
    <scope>IDENTIFICATION BY MASS SPECTROMETRY [LARGE SCALE ANALYSIS]</scope>
    <source>
        <tissue>Spleen</tissue>
    </source>
</reference>
<organism>
    <name type="scientific">Mus musculus</name>
    <name type="common">Mouse</name>
    <dbReference type="NCBI Taxonomy" id="10090"/>
    <lineage>
        <taxon>Eukaryota</taxon>
        <taxon>Metazoa</taxon>
        <taxon>Chordata</taxon>
        <taxon>Craniata</taxon>
        <taxon>Vertebrata</taxon>
        <taxon>Euteleostomi</taxon>
        <taxon>Mammalia</taxon>
        <taxon>Eutheria</taxon>
        <taxon>Euarchontoglires</taxon>
        <taxon>Glires</taxon>
        <taxon>Rodentia</taxon>
        <taxon>Myomorpha</taxon>
        <taxon>Muroidea</taxon>
        <taxon>Muridae</taxon>
        <taxon>Murinae</taxon>
        <taxon>Mus</taxon>
        <taxon>Mus</taxon>
    </lineage>
</organism>
<comment type="function">
    <text>Regulates CDK7, the catalytic subunit of the CDK-activating kinase (CAK) enzymatic complex. CAK activates the cyclin-associated kinases CDK1, CDK2, CDK4 and CDK6 by threonine phosphorylation. CAK complexed to the core-TFIIH basal transcription factor activates RNA polymerase II by serine phosphorylation of the repetitive C-terminal domain (CTD) of its large subunit (POLR2A), allowing its escape from the promoter and elongation of the transcripts. Involved in cell cycle control and in RNA transcription by RNA polymerase II. Its expression and activity are constant throughout the cell cycle.</text>
</comment>
<comment type="subunit">
    <text>Associates primarily with CDK7 and MAT1 to form the CAK complex. CAK can further associate with the core-TFIIH to form the TFIIH basal transcription factor.</text>
</comment>
<comment type="subcellular location">
    <subcellularLocation>
        <location>Nucleus</location>
    </subcellularLocation>
</comment>
<comment type="tissue specificity">
    <text>Expressed in both the germinal and somatic cells of the testis.</text>
</comment>
<comment type="developmental stage">
    <text>Higher expression during spermatogenesis from the mitotic stages to the meiotic stages.</text>
</comment>
<comment type="similarity">
    <text evidence="3">Belongs to the cyclin family. Cyclin C subfamily.</text>
</comment>
<keyword id="KW-0131">Cell cycle</keyword>
<keyword id="KW-0195">Cyclin</keyword>
<keyword id="KW-0539">Nucleus</keyword>
<keyword id="KW-0597">Phosphoprotein</keyword>
<keyword id="KW-1185">Reference proteome</keyword>
<keyword id="KW-0804">Transcription</keyword>
<keyword id="KW-0805">Transcription regulation</keyword>
<protein>
    <recommendedName>
        <fullName>Cyclin-H</fullName>
    </recommendedName>
</protein>
<feature type="chain" id="PRO_0000080472" description="Cyclin-H">
    <location>
        <begin position="1"/>
        <end position="323"/>
    </location>
</feature>
<feature type="region of interest" description="Disordered" evidence="2">
    <location>
        <begin position="295"/>
        <end position="323"/>
    </location>
</feature>
<feature type="compositionally biased region" description="Acidic residues" evidence="2">
    <location>
        <begin position="310"/>
        <end position="323"/>
    </location>
</feature>
<feature type="modified residue" description="Phosphoserine; by CDK8" evidence="1">
    <location>
        <position position="5"/>
    </location>
</feature>
<feature type="modified residue" description="Phosphoserine" evidence="1">
    <location>
        <position position="132"/>
    </location>
</feature>
<feature type="modified residue" description="Phosphoserine; by CDK8" evidence="1">
    <location>
        <position position="304"/>
    </location>
</feature>
<feature type="modified residue" description="Phosphothreonine" evidence="1">
    <location>
        <position position="315"/>
    </location>
</feature>
<feature type="modified residue" description="Phosphoserine" evidence="1">
    <location>
        <position position="322"/>
    </location>
</feature>
<dbReference type="EMBL" id="AF287135">
    <property type="protein sequence ID" value="AAF90198.1"/>
    <property type="molecule type" value="mRNA"/>
</dbReference>
<dbReference type="EMBL" id="AK007910">
    <property type="protein sequence ID" value="BAB25343.1"/>
    <property type="molecule type" value="mRNA"/>
</dbReference>
<dbReference type="EMBL" id="AK078059">
    <property type="protein sequence ID" value="BAC37112.1"/>
    <property type="molecule type" value="mRNA"/>
</dbReference>
<dbReference type="EMBL" id="BC038861">
    <property type="protein sequence ID" value="AAH38861.1"/>
    <property type="molecule type" value="mRNA"/>
</dbReference>
<dbReference type="EMBL" id="X82441">
    <property type="protein sequence ID" value="CAA57822.1"/>
    <property type="molecule type" value="mRNA"/>
</dbReference>
<dbReference type="CCDS" id="CCDS26666.1"/>
<dbReference type="PIR" id="S48862">
    <property type="entry name" value="S48862"/>
</dbReference>
<dbReference type="RefSeq" id="NP_001334516.1">
    <property type="nucleotide sequence ID" value="NM_001347587.1"/>
</dbReference>
<dbReference type="RefSeq" id="NP_001334517.1">
    <property type="nucleotide sequence ID" value="NM_001347588.1"/>
</dbReference>
<dbReference type="RefSeq" id="NP_075732.1">
    <property type="nucleotide sequence ID" value="NM_023243.6"/>
</dbReference>
<dbReference type="SMR" id="Q61458"/>
<dbReference type="BioGRID" id="211635">
    <property type="interactions" value="4"/>
</dbReference>
<dbReference type="ComplexPortal" id="CPX-3268">
    <property type="entry name" value="Cyclin-dependent protein kinase-activating kinase complex"/>
</dbReference>
<dbReference type="FunCoup" id="Q61458">
    <property type="interactions" value="3394"/>
</dbReference>
<dbReference type="STRING" id="10090.ENSMUSP00000022030"/>
<dbReference type="iPTMnet" id="Q61458"/>
<dbReference type="PhosphoSitePlus" id="Q61458"/>
<dbReference type="PaxDb" id="10090-ENSMUSP00000022030"/>
<dbReference type="ProteomicsDB" id="281253"/>
<dbReference type="Pumba" id="Q61458"/>
<dbReference type="Antibodypedia" id="12934">
    <property type="antibodies" value="536 antibodies from 38 providers"/>
</dbReference>
<dbReference type="DNASU" id="66671"/>
<dbReference type="Ensembl" id="ENSMUST00000022030.11">
    <property type="protein sequence ID" value="ENSMUSP00000022030.5"/>
    <property type="gene ID" value="ENSMUSG00000021548.11"/>
</dbReference>
<dbReference type="GeneID" id="66671"/>
<dbReference type="KEGG" id="mmu:66671"/>
<dbReference type="UCSC" id="uc007riu.1">
    <property type="organism name" value="mouse"/>
</dbReference>
<dbReference type="AGR" id="MGI:1913921"/>
<dbReference type="CTD" id="902"/>
<dbReference type="MGI" id="MGI:1913921">
    <property type="gene designation" value="Ccnh"/>
</dbReference>
<dbReference type="VEuPathDB" id="HostDB:ENSMUSG00000021548"/>
<dbReference type="eggNOG" id="KOG2496">
    <property type="taxonomic scope" value="Eukaryota"/>
</dbReference>
<dbReference type="GeneTree" id="ENSGT00390000008634"/>
<dbReference type="HOGENOM" id="CLU_022620_0_0_1"/>
<dbReference type="InParanoid" id="Q61458"/>
<dbReference type="OMA" id="FRVEQNT"/>
<dbReference type="OrthoDB" id="340962at2759"/>
<dbReference type="PhylomeDB" id="Q61458"/>
<dbReference type="TreeFam" id="TF101008"/>
<dbReference type="Reactome" id="R-MMU-112382">
    <property type="pathway name" value="Formation of RNA Pol II elongation complex"/>
</dbReference>
<dbReference type="Reactome" id="R-MMU-113418">
    <property type="pathway name" value="Formation of the Early Elongation Complex"/>
</dbReference>
<dbReference type="Reactome" id="R-MMU-5696395">
    <property type="pathway name" value="Formation of Incision Complex in GG-NER"/>
</dbReference>
<dbReference type="Reactome" id="R-MMU-674695">
    <property type="pathway name" value="RNA Polymerase II Pre-transcription Events"/>
</dbReference>
<dbReference type="Reactome" id="R-MMU-6781823">
    <property type="pathway name" value="Formation of TC-NER Pre-Incision Complex"/>
</dbReference>
<dbReference type="Reactome" id="R-MMU-6782135">
    <property type="pathway name" value="Dual incision in TC-NER"/>
</dbReference>
<dbReference type="Reactome" id="R-MMU-6782210">
    <property type="pathway name" value="Gap-filling DNA repair synthesis and ligation in TC-NER"/>
</dbReference>
<dbReference type="Reactome" id="R-MMU-6796648">
    <property type="pathway name" value="TP53 Regulates Transcription of DNA Repair Genes"/>
</dbReference>
<dbReference type="Reactome" id="R-MMU-69202">
    <property type="pathway name" value="Cyclin E associated events during G1/S transition"/>
</dbReference>
<dbReference type="Reactome" id="R-MMU-69231">
    <property type="pathway name" value="Cyclin D associated events in G1"/>
</dbReference>
<dbReference type="Reactome" id="R-MMU-69273">
    <property type="pathway name" value="Cyclin A/B1/B2 associated events during G2/M transition"/>
</dbReference>
<dbReference type="Reactome" id="R-MMU-69656">
    <property type="pathway name" value="Cyclin A:Cdk2-associated events at S phase entry"/>
</dbReference>
<dbReference type="Reactome" id="R-MMU-72086">
    <property type="pathway name" value="mRNA Capping"/>
</dbReference>
<dbReference type="Reactome" id="R-MMU-73762">
    <property type="pathway name" value="RNA Polymerase I Transcription Initiation"/>
</dbReference>
<dbReference type="Reactome" id="R-MMU-73772">
    <property type="pathway name" value="RNA Polymerase I Promoter Escape"/>
</dbReference>
<dbReference type="Reactome" id="R-MMU-73776">
    <property type="pathway name" value="RNA Polymerase II Promoter Escape"/>
</dbReference>
<dbReference type="Reactome" id="R-MMU-73779">
    <property type="pathway name" value="RNA Polymerase II Transcription Pre-Initiation And Promoter Opening"/>
</dbReference>
<dbReference type="Reactome" id="R-MMU-73863">
    <property type="pathway name" value="RNA Polymerase I Transcription Termination"/>
</dbReference>
<dbReference type="Reactome" id="R-MMU-75953">
    <property type="pathway name" value="RNA Polymerase II Transcription Initiation"/>
</dbReference>
<dbReference type="Reactome" id="R-MMU-75955">
    <property type="pathway name" value="RNA Polymerase II Transcription Elongation"/>
</dbReference>
<dbReference type="Reactome" id="R-MMU-76042">
    <property type="pathway name" value="RNA Polymerase II Transcription Initiation And Promoter Clearance"/>
</dbReference>
<dbReference type="Reactome" id="R-MMU-77075">
    <property type="pathway name" value="RNA Pol II CTD phosphorylation and interaction with CE"/>
</dbReference>
<dbReference type="Reactome" id="R-MMU-8939236">
    <property type="pathway name" value="RUNX1 regulates transcription of genes involved in differentiation of HSCs"/>
</dbReference>
<dbReference type="BioGRID-ORCS" id="66671">
    <property type="hits" value="26 hits in 81 CRISPR screens"/>
</dbReference>
<dbReference type="ChiTaRS" id="Ccnh">
    <property type="organism name" value="mouse"/>
</dbReference>
<dbReference type="PRO" id="PR:Q61458"/>
<dbReference type="Proteomes" id="UP000000589">
    <property type="component" value="Chromosome 13"/>
</dbReference>
<dbReference type="RNAct" id="Q61458">
    <property type="molecule type" value="protein"/>
</dbReference>
<dbReference type="Bgee" id="ENSMUSG00000021548">
    <property type="expression patterns" value="Expressed in interventricular septum and 254 other cell types or tissues"/>
</dbReference>
<dbReference type="ExpressionAtlas" id="Q61458">
    <property type="expression patterns" value="baseline and differential"/>
</dbReference>
<dbReference type="GO" id="GO:0070516">
    <property type="term" value="C:CAK-ERCC2 complex"/>
    <property type="evidence" value="ECO:0007669"/>
    <property type="project" value="Ensembl"/>
</dbReference>
<dbReference type="GO" id="GO:0000307">
    <property type="term" value="C:cyclin-dependent protein kinase holoenzyme complex"/>
    <property type="evidence" value="ECO:0000266"/>
    <property type="project" value="ComplexPortal"/>
</dbReference>
<dbReference type="GO" id="GO:0001673">
    <property type="term" value="C:male germ cell nucleus"/>
    <property type="evidence" value="ECO:0000314"/>
    <property type="project" value="MGI"/>
</dbReference>
<dbReference type="GO" id="GO:0000439">
    <property type="term" value="C:transcription factor TFIIH core complex"/>
    <property type="evidence" value="ECO:0007669"/>
    <property type="project" value="Ensembl"/>
</dbReference>
<dbReference type="GO" id="GO:0005675">
    <property type="term" value="C:transcription factor TFIIH holo complex"/>
    <property type="evidence" value="ECO:0000250"/>
    <property type="project" value="UniProtKB"/>
</dbReference>
<dbReference type="GO" id="GO:0070985">
    <property type="term" value="C:transcription factor TFIIK complex"/>
    <property type="evidence" value="ECO:0007669"/>
    <property type="project" value="Ensembl"/>
</dbReference>
<dbReference type="GO" id="GO:0004693">
    <property type="term" value="F:cyclin-dependent protein serine/threonine kinase activity"/>
    <property type="evidence" value="ECO:0000250"/>
    <property type="project" value="MGI"/>
</dbReference>
<dbReference type="GO" id="GO:0016538">
    <property type="term" value="F:cyclin-dependent protein serine/threonine kinase regulator activity"/>
    <property type="evidence" value="ECO:0007669"/>
    <property type="project" value="InterPro"/>
</dbReference>
<dbReference type="GO" id="GO:0016301">
    <property type="term" value="F:kinase activity"/>
    <property type="evidence" value="ECO:0000314"/>
    <property type="project" value="MGI"/>
</dbReference>
<dbReference type="GO" id="GO:0016251">
    <property type="term" value="F:RNA polymerase II general transcription initiation factor activity"/>
    <property type="evidence" value="ECO:0007669"/>
    <property type="project" value="Ensembl"/>
</dbReference>
<dbReference type="GO" id="GO:0050821">
    <property type="term" value="P:protein stabilization"/>
    <property type="evidence" value="ECO:0007669"/>
    <property type="project" value="Ensembl"/>
</dbReference>
<dbReference type="GO" id="GO:2000045">
    <property type="term" value="P:regulation of G1/S transition of mitotic cell cycle"/>
    <property type="evidence" value="ECO:0000266"/>
    <property type="project" value="ComplexPortal"/>
</dbReference>
<dbReference type="GO" id="GO:0006357">
    <property type="term" value="P:regulation of transcription by RNA polymerase II"/>
    <property type="evidence" value="ECO:0000250"/>
    <property type="project" value="UniProtKB"/>
</dbReference>
<dbReference type="GO" id="GO:0006367">
    <property type="term" value="P:transcription initiation at RNA polymerase II promoter"/>
    <property type="evidence" value="ECO:0007669"/>
    <property type="project" value="Ensembl"/>
</dbReference>
<dbReference type="CDD" id="cd20524">
    <property type="entry name" value="CYCLIN_CCNH_rpt1"/>
    <property type="match status" value="1"/>
</dbReference>
<dbReference type="CDD" id="cd20525">
    <property type="entry name" value="CYCLIN_CCNH_rpt2"/>
    <property type="match status" value="1"/>
</dbReference>
<dbReference type="FunFam" id="1.10.472.10:FF:000029">
    <property type="entry name" value="Cyclin h"/>
    <property type="match status" value="1"/>
</dbReference>
<dbReference type="FunFam" id="1.10.472.10:FF:000044">
    <property type="entry name" value="cyclin-H isoform X1"/>
    <property type="match status" value="1"/>
</dbReference>
<dbReference type="Gene3D" id="1.10.472.10">
    <property type="entry name" value="Cyclin-like"/>
    <property type="match status" value="2"/>
</dbReference>
<dbReference type="InterPro" id="IPR013763">
    <property type="entry name" value="Cyclin-like_dom"/>
</dbReference>
<dbReference type="InterPro" id="IPR036915">
    <property type="entry name" value="Cyclin-like_sf"/>
</dbReference>
<dbReference type="InterPro" id="IPR043198">
    <property type="entry name" value="Cyclin/Ssn8"/>
</dbReference>
<dbReference type="InterPro" id="IPR031658">
    <property type="entry name" value="Cyclin_C_2"/>
</dbReference>
<dbReference type="InterPro" id="IPR006671">
    <property type="entry name" value="Cyclin_N"/>
</dbReference>
<dbReference type="InterPro" id="IPR027081">
    <property type="entry name" value="CyclinH/Ccl1"/>
</dbReference>
<dbReference type="NCBIfam" id="TIGR00569">
    <property type="entry name" value="ccl1"/>
    <property type="match status" value="1"/>
</dbReference>
<dbReference type="PANTHER" id="PTHR10026">
    <property type="entry name" value="CYCLIN"/>
    <property type="match status" value="1"/>
</dbReference>
<dbReference type="Pfam" id="PF16899">
    <property type="entry name" value="Cyclin_C_2"/>
    <property type="match status" value="1"/>
</dbReference>
<dbReference type="Pfam" id="PF00134">
    <property type="entry name" value="Cyclin_N"/>
    <property type="match status" value="1"/>
</dbReference>
<dbReference type="SMART" id="SM00385">
    <property type="entry name" value="CYCLIN"/>
    <property type="match status" value="1"/>
</dbReference>
<dbReference type="SUPFAM" id="SSF47954">
    <property type="entry name" value="Cyclin-like"/>
    <property type="match status" value="2"/>
</dbReference>
<name>CCNH_MOUSE</name>